<comment type="function">
    <text evidence="1">Component of the cytochrome c oxidase, the last enzyme in the mitochondrial electron transport chain which drives oxidative phosphorylation. The respiratory chain contains 3 multisubunit complexes succinate dehydrogenase (complex II, CII), ubiquinol-cytochrome c oxidoreductase (cytochrome b-c1 complex, complex III, CIII) and cytochrome c oxidase (complex IV, CIV), that cooperate to transfer electrons derived from NADH and succinate to molecular oxygen, creating an electrochemical gradient over the inner membrane that drives transmembrane transport and the ATP synthase. Cytochrome c oxidase is the component of the respiratory chain that catalyzes the reduction of oxygen to water. Electrons originating from reduced cytochrome c in the intermembrane space (IMS) are transferred via the dinuclear copper A center (CU(A)) of subunit 2 and heme A of subunit 1 to the active site in subunit 1, a binuclear center (BNC) formed by heme A3 and copper B (CU(B)). The BNC reduces molecular oxygen to 2 water molecules using 4 electrons from cytochrome c in the IMS and 4 protons from the mitochondrial matrix.</text>
</comment>
<comment type="catalytic activity">
    <reaction evidence="1">
        <text>4 Fe(II)-[cytochrome c] + O2 + 8 H(+)(in) = 4 Fe(III)-[cytochrome c] + 2 H2O + 4 H(+)(out)</text>
        <dbReference type="Rhea" id="RHEA:11436"/>
        <dbReference type="Rhea" id="RHEA-COMP:10350"/>
        <dbReference type="Rhea" id="RHEA-COMP:14399"/>
        <dbReference type="ChEBI" id="CHEBI:15377"/>
        <dbReference type="ChEBI" id="CHEBI:15378"/>
        <dbReference type="ChEBI" id="CHEBI:15379"/>
        <dbReference type="ChEBI" id="CHEBI:29033"/>
        <dbReference type="ChEBI" id="CHEBI:29034"/>
        <dbReference type="EC" id="7.1.1.9"/>
    </reaction>
    <physiologicalReaction direction="left-to-right" evidence="1">
        <dbReference type="Rhea" id="RHEA:11437"/>
    </physiologicalReaction>
</comment>
<comment type="cofactor">
    <cofactor evidence="1">
        <name>Cu cation</name>
        <dbReference type="ChEBI" id="CHEBI:23378"/>
    </cofactor>
    <text evidence="1">Binds a dinuclear copper A center per subunit.</text>
</comment>
<comment type="subunit">
    <text evidence="1">Component of the cytochrome c oxidase (complex IV, CIV), a multisubunit enzyme composed of a catalytic core of 3 subunits and several supernumerary subunits. The complex exists as a monomer or a dimer and forms supercomplexes (SCs) in the inner mitochondrial membrane with ubiquinol-cytochrome c oxidoreductase (cytochrome b-c1 complex, complex III, CIII).</text>
</comment>
<comment type="subcellular location">
    <subcellularLocation>
        <location evidence="1">Mitochondrion inner membrane</location>
        <topology evidence="1">Multi-pass membrane protein</topology>
    </subcellularLocation>
</comment>
<comment type="similarity">
    <text evidence="3">Belongs to the cytochrome c oxidase subunit 2 family.</text>
</comment>
<evidence type="ECO:0000250" key="1">
    <source>
        <dbReference type="UniProtKB" id="P00410"/>
    </source>
</evidence>
<evidence type="ECO:0000255" key="2"/>
<evidence type="ECO:0000305" key="3"/>
<name>COX2_SIMVI</name>
<feature type="chain" id="PRO_0000183690" description="Cytochrome c oxidase subunit 2">
    <location>
        <begin position="1"/>
        <end position="229"/>
    </location>
</feature>
<feature type="topological domain" description="Mitochondrial intermembrane" evidence="2">
    <location>
        <begin position="1"/>
        <end position="26"/>
    </location>
</feature>
<feature type="transmembrane region" description="Helical" evidence="2">
    <location>
        <begin position="27"/>
        <end position="48"/>
    </location>
</feature>
<feature type="topological domain" description="Mitochondrial matrix" evidence="2">
    <location>
        <begin position="49"/>
        <end position="62"/>
    </location>
</feature>
<feature type="transmembrane region" description="Helical" evidence="2">
    <location>
        <begin position="63"/>
        <end position="82"/>
    </location>
</feature>
<feature type="topological domain" description="Mitochondrial intermembrane" evidence="2">
    <location>
        <begin position="83"/>
        <end position="229"/>
    </location>
</feature>
<feature type="binding site" evidence="1">
    <location>
        <position position="161"/>
    </location>
    <ligand>
        <name>Cu cation</name>
        <dbReference type="ChEBI" id="CHEBI:23378"/>
        <label>A1</label>
    </ligand>
</feature>
<feature type="binding site" evidence="1">
    <location>
        <position position="196"/>
    </location>
    <ligand>
        <name>Cu cation</name>
        <dbReference type="ChEBI" id="CHEBI:23378"/>
        <label>A1</label>
    </ligand>
</feature>
<feature type="binding site" evidence="1">
    <location>
        <position position="196"/>
    </location>
    <ligand>
        <name>Cu cation</name>
        <dbReference type="ChEBI" id="CHEBI:23378"/>
        <label>A2</label>
    </ligand>
</feature>
<feature type="binding site" evidence="1">
    <location>
        <position position="198"/>
    </location>
    <ligand>
        <name>Cu cation</name>
        <dbReference type="ChEBI" id="CHEBI:23378"/>
        <label>A2</label>
    </ligand>
</feature>
<feature type="binding site" evidence="1">
    <location>
        <position position="198"/>
    </location>
    <ligand>
        <name>Mg(2+)</name>
        <dbReference type="ChEBI" id="CHEBI:18420"/>
        <note>ligand shared with subunit 1</note>
    </ligand>
</feature>
<feature type="binding site" evidence="1">
    <location>
        <position position="200"/>
    </location>
    <ligand>
        <name>Cu cation</name>
        <dbReference type="ChEBI" id="CHEBI:23378"/>
        <label>A1</label>
    </ligand>
</feature>
<feature type="binding site" evidence="1">
    <location>
        <position position="200"/>
    </location>
    <ligand>
        <name>Cu cation</name>
        <dbReference type="ChEBI" id="CHEBI:23378"/>
        <label>A2</label>
    </ligand>
</feature>
<feature type="binding site" evidence="1">
    <location>
        <position position="204"/>
    </location>
    <ligand>
        <name>Cu cation</name>
        <dbReference type="ChEBI" id="CHEBI:23378"/>
        <label>A2</label>
    </ligand>
</feature>
<feature type="binding site" evidence="1">
    <location>
        <position position="207"/>
    </location>
    <ligand>
        <name>Cu cation</name>
        <dbReference type="ChEBI" id="CHEBI:23378"/>
        <label>A1</label>
    </ligand>
</feature>
<dbReference type="EC" id="7.1.1.9"/>
<dbReference type="EMBL" id="M76433">
    <property type="protein sequence ID" value="AAA32072.1"/>
    <property type="molecule type" value="Genomic_DNA"/>
</dbReference>
<dbReference type="EMBL" id="AF083865">
    <property type="protein sequence ID" value="AAC64095.1"/>
    <property type="molecule type" value="Genomic_DNA"/>
</dbReference>
<dbReference type="SMR" id="P98021"/>
<dbReference type="GO" id="GO:0005743">
    <property type="term" value="C:mitochondrial inner membrane"/>
    <property type="evidence" value="ECO:0007669"/>
    <property type="project" value="UniProtKB-SubCell"/>
</dbReference>
<dbReference type="GO" id="GO:0005507">
    <property type="term" value="F:copper ion binding"/>
    <property type="evidence" value="ECO:0007669"/>
    <property type="project" value="InterPro"/>
</dbReference>
<dbReference type="GO" id="GO:0004129">
    <property type="term" value="F:cytochrome-c oxidase activity"/>
    <property type="evidence" value="ECO:0007669"/>
    <property type="project" value="UniProtKB-EC"/>
</dbReference>
<dbReference type="GO" id="GO:0042773">
    <property type="term" value="P:ATP synthesis coupled electron transport"/>
    <property type="evidence" value="ECO:0007669"/>
    <property type="project" value="TreeGrafter"/>
</dbReference>
<dbReference type="CDD" id="cd13912">
    <property type="entry name" value="CcO_II_C"/>
    <property type="match status" value="1"/>
</dbReference>
<dbReference type="FunFam" id="1.10.287.90:FF:000006">
    <property type="entry name" value="Cytochrome c oxidase subunit 2"/>
    <property type="match status" value="1"/>
</dbReference>
<dbReference type="FunFam" id="2.60.40.420:FF:000001">
    <property type="entry name" value="Cytochrome c oxidase subunit 2"/>
    <property type="match status" value="1"/>
</dbReference>
<dbReference type="Gene3D" id="1.10.287.90">
    <property type="match status" value="1"/>
</dbReference>
<dbReference type="Gene3D" id="2.60.40.420">
    <property type="entry name" value="Cupredoxins - blue copper proteins"/>
    <property type="match status" value="1"/>
</dbReference>
<dbReference type="InterPro" id="IPR045187">
    <property type="entry name" value="CcO_II"/>
</dbReference>
<dbReference type="InterPro" id="IPR002429">
    <property type="entry name" value="CcO_II-like_C"/>
</dbReference>
<dbReference type="InterPro" id="IPR034210">
    <property type="entry name" value="CcO_II_C"/>
</dbReference>
<dbReference type="InterPro" id="IPR001505">
    <property type="entry name" value="Copper_CuA"/>
</dbReference>
<dbReference type="InterPro" id="IPR008972">
    <property type="entry name" value="Cupredoxin"/>
</dbReference>
<dbReference type="InterPro" id="IPR014222">
    <property type="entry name" value="Cyt_c_oxidase_su2"/>
</dbReference>
<dbReference type="InterPro" id="IPR011759">
    <property type="entry name" value="Cyt_c_oxidase_su2_TM_dom"/>
</dbReference>
<dbReference type="InterPro" id="IPR036257">
    <property type="entry name" value="Cyt_c_oxidase_su2_TM_sf"/>
</dbReference>
<dbReference type="NCBIfam" id="TIGR02866">
    <property type="entry name" value="CoxB"/>
    <property type="match status" value="1"/>
</dbReference>
<dbReference type="PANTHER" id="PTHR22888:SF9">
    <property type="entry name" value="CYTOCHROME C OXIDASE SUBUNIT 2"/>
    <property type="match status" value="1"/>
</dbReference>
<dbReference type="PANTHER" id="PTHR22888">
    <property type="entry name" value="CYTOCHROME C OXIDASE, SUBUNIT II"/>
    <property type="match status" value="1"/>
</dbReference>
<dbReference type="Pfam" id="PF00116">
    <property type="entry name" value="COX2"/>
    <property type="match status" value="1"/>
</dbReference>
<dbReference type="Pfam" id="PF02790">
    <property type="entry name" value="COX2_TM"/>
    <property type="match status" value="1"/>
</dbReference>
<dbReference type="PRINTS" id="PR01166">
    <property type="entry name" value="CYCOXIDASEII"/>
</dbReference>
<dbReference type="SUPFAM" id="SSF49503">
    <property type="entry name" value="Cupredoxins"/>
    <property type="match status" value="1"/>
</dbReference>
<dbReference type="SUPFAM" id="SSF81464">
    <property type="entry name" value="Cytochrome c oxidase subunit II-like, transmembrane region"/>
    <property type="match status" value="1"/>
</dbReference>
<dbReference type="PROSITE" id="PS00078">
    <property type="entry name" value="COX2"/>
    <property type="match status" value="1"/>
</dbReference>
<dbReference type="PROSITE" id="PS50857">
    <property type="entry name" value="COX2_CUA"/>
    <property type="match status" value="1"/>
</dbReference>
<dbReference type="PROSITE" id="PS50999">
    <property type="entry name" value="COX2_TM"/>
    <property type="match status" value="1"/>
</dbReference>
<organism>
    <name type="scientific">Simulium vittatum</name>
    <name type="common">Striped black fly</name>
    <dbReference type="NCBI Taxonomy" id="7192"/>
    <lineage>
        <taxon>Eukaryota</taxon>
        <taxon>Metazoa</taxon>
        <taxon>Ecdysozoa</taxon>
        <taxon>Arthropoda</taxon>
        <taxon>Hexapoda</taxon>
        <taxon>Insecta</taxon>
        <taxon>Pterygota</taxon>
        <taxon>Neoptera</taxon>
        <taxon>Endopterygota</taxon>
        <taxon>Diptera</taxon>
        <taxon>Nematocera</taxon>
        <taxon>Chironomoidea</taxon>
        <taxon>Simuliidae</taxon>
        <taxon>Simulium</taxon>
    </lineage>
</organism>
<accession>P98021</accession>
<protein>
    <recommendedName>
        <fullName>Cytochrome c oxidase subunit 2</fullName>
        <ecNumber>7.1.1.9</ecNumber>
    </recommendedName>
    <alternativeName>
        <fullName>Cytochrome c oxidase polypeptide II</fullName>
    </alternativeName>
</protein>
<sequence length="229" mass="26275">MATWSNLGLQDSASPLMEQLNFFHDHTLLILIMITILVGYLMLMLFFNKFTNRFLLHGQTIEIIWTILPAIVLMFIALPSLRILYLLDEINSPAITLKTIGHQWYWSYEYSDFMNLEFDSYMVPTNELETNGFRLLDVDNRIVLPMNTQIRILVTAADVIHSWTVPALGVKVDGTPGRLNQTNFLMNRPGLFFGQCSEICGANHSFMPIVLESSPTNYFIKWITAMNSN</sequence>
<keyword id="KW-0186">Copper</keyword>
<keyword id="KW-0249">Electron transport</keyword>
<keyword id="KW-0460">Magnesium</keyword>
<keyword id="KW-0472">Membrane</keyword>
<keyword id="KW-0479">Metal-binding</keyword>
<keyword id="KW-0496">Mitochondrion</keyword>
<keyword id="KW-0999">Mitochondrion inner membrane</keyword>
<keyword id="KW-0679">Respiratory chain</keyword>
<keyword id="KW-1278">Translocase</keyword>
<keyword id="KW-0812">Transmembrane</keyword>
<keyword id="KW-1133">Transmembrane helix</keyword>
<keyword id="KW-0813">Transport</keyword>
<proteinExistence type="inferred from homology"/>
<geneLocation type="mitochondrion"/>
<reference key="1">
    <citation type="journal article" date="1992" name="J. Med. Entomol.">
        <title>Mitochondrial transfer RNA genes in a black fly, Simulium vittatum (Diptera: Simuliidae), indicate long divergence from mosquito (Diptera: Culicidae) and fruit fly (Diptera: Drosophilidae).</title>
        <authorList>
            <person name="Pruess K.P."/>
            <person name="Zhu X."/>
            <person name="Powers T.O."/>
        </authorList>
    </citation>
    <scope>NUCLEOTIDE SEQUENCE [GENOMIC DNA]</scope>
</reference>
<reference key="2">
    <citation type="submission" date="1998-08" db="EMBL/GenBank/DDBJ databases">
        <title>Phylogenetic relationships of black flies (Diptera: Simuliidae) inferred from the mitochondrial cytochrome oxidase II gene.</title>
        <authorList>
            <person name="Pruess K.P."/>
            <person name="Adams B.J."/>
            <person name="Parsons T.J."/>
            <person name="Zhu X."/>
            <person name="Powers T.O."/>
        </authorList>
    </citation>
    <scope>NUCLEOTIDE SEQUENCE [GENOMIC DNA]</scope>
</reference>
<gene>
    <name type="primary">COII</name>
</gene>